<comment type="cofactor">
    <cofactor evidence="1">
        <name>Zn(2+)</name>
        <dbReference type="ChEBI" id="CHEBI:29105"/>
    </cofactor>
    <text evidence="1">Binds 1 zinc ion.</text>
</comment>
<comment type="biophysicochemical properties">
    <phDependence>
        <text>Optimum pH is 8.0.</text>
    </phDependence>
    <temperatureDependence>
        <text>Optimum temperature is 50 degrees Celsius.</text>
    </temperatureDependence>
</comment>
<comment type="subcellular location">
    <subcellularLocation>
        <location>Secreted</location>
    </subcellularLocation>
</comment>
<comment type="similarity">
    <text evidence="5">Belongs to the peptidase M4 family.</text>
</comment>
<sequence>MPAQRMRSVIPPYMLRALLTRYAPQRDCALHTLNHVQSLLGNKPLRSPTEKNARAGERSAISTTPERHPTARQTGAQGGAAQQPRRAVDEAYDHLGVTYDFFWQAYRRNSVDNKGLPLVQRALRQGLPEQLSGTASRWCSETATARSSTVSPSPSTLVGHELTHGSDRERSRLIYYQQSGALNESLSDVFGSLVKQFHLQQTADKADWLIGAGLLAKGIKGKGLRSMSAPGTAYDDPLLGKDPQPASMKDYIQTKEDNGGVHLNSGIPNRAFYLAATVLGGFAGKKPVTSGMTRCATKRCRKTPTSDHLRPRHGETRAGLRTKRGDKVQQAWASGWQWSNETAADAQSGYGH</sequence>
<name>SMP_SERME</name>
<keyword id="KW-0903">Direct protein sequencing</keyword>
<keyword id="KW-0378">Hydrolase</keyword>
<keyword id="KW-0479">Metal-binding</keyword>
<keyword id="KW-0482">Metalloprotease</keyword>
<keyword id="KW-0645">Protease</keyword>
<keyword id="KW-0964">Secreted</keyword>
<keyword id="KW-0732">Signal</keyword>
<keyword id="KW-0862">Zinc</keyword>
<keyword id="KW-0865">Zymogen</keyword>
<feature type="signal peptide">
    <location>
        <begin position="1"/>
        <end status="unknown"/>
    </location>
</feature>
<feature type="propeptide" id="PRO_0000028624" description="Activation peptide" evidence="4">
    <location>
        <begin status="unknown"/>
        <end position="52"/>
    </location>
</feature>
<feature type="chain" id="PRO_0000028625" description="Extracellular minor metalloprotease">
    <location>
        <begin position="53"/>
        <end position="352"/>
    </location>
</feature>
<feature type="region of interest" description="Disordered" evidence="3">
    <location>
        <begin position="41"/>
        <end position="86"/>
    </location>
</feature>
<feature type="region of interest" description="Disordered" evidence="3">
    <location>
        <begin position="144"/>
        <end position="164"/>
    </location>
</feature>
<feature type="region of interest" description="Disordered" evidence="3">
    <location>
        <begin position="303"/>
        <end position="325"/>
    </location>
</feature>
<feature type="compositionally biased region" description="Basic and acidic residues" evidence="3">
    <location>
        <begin position="48"/>
        <end position="57"/>
    </location>
</feature>
<feature type="compositionally biased region" description="Low complexity" evidence="3">
    <location>
        <begin position="71"/>
        <end position="85"/>
    </location>
</feature>
<feature type="compositionally biased region" description="Low complexity" evidence="3">
    <location>
        <begin position="144"/>
        <end position="156"/>
    </location>
</feature>
<feature type="compositionally biased region" description="Basic and acidic residues" evidence="3">
    <location>
        <begin position="304"/>
        <end position="325"/>
    </location>
</feature>
<feature type="active site" evidence="2">
    <location>
        <position position="161"/>
    </location>
</feature>
<feature type="active site" description="Proton donor" evidence="2">
    <location>
        <position position="262"/>
    </location>
</feature>
<feature type="binding site" evidence="2">
    <location>
        <position position="160"/>
    </location>
    <ligand>
        <name>Zn(2+)</name>
        <dbReference type="ChEBI" id="CHEBI:29105"/>
        <note>catalytic</note>
    </ligand>
</feature>
<feature type="binding site" evidence="2">
    <location>
        <position position="164"/>
    </location>
    <ligand>
        <name>Zn(2+)</name>
        <dbReference type="ChEBI" id="CHEBI:29105"/>
        <note>catalytic</note>
    </ligand>
</feature>
<feature type="binding site" evidence="2">
    <location>
        <position position="184"/>
    </location>
    <ligand>
        <name>Zn(2+)</name>
        <dbReference type="ChEBI" id="CHEBI:29105"/>
        <note>catalytic</note>
    </ligand>
</feature>
<dbReference type="EC" id="3.4.24.-"/>
<dbReference type="EMBL" id="M59854">
    <property type="protein sequence ID" value="AAA26553.1"/>
    <property type="molecule type" value="Genomic_DNA"/>
</dbReference>
<dbReference type="PIR" id="JU0153">
    <property type="entry name" value="JU0153"/>
</dbReference>
<dbReference type="SMR" id="Q06517"/>
<dbReference type="MEROPS" id="M04.025"/>
<dbReference type="GO" id="GO:0005576">
    <property type="term" value="C:extracellular region"/>
    <property type="evidence" value="ECO:0007669"/>
    <property type="project" value="UniProtKB-SubCell"/>
</dbReference>
<dbReference type="GO" id="GO:0046872">
    <property type="term" value="F:metal ion binding"/>
    <property type="evidence" value="ECO:0007669"/>
    <property type="project" value="UniProtKB-KW"/>
</dbReference>
<dbReference type="GO" id="GO:0004222">
    <property type="term" value="F:metalloendopeptidase activity"/>
    <property type="evidence" value="ECO:0007669"/>
    <property type="project" value="InterPro"/>
</dbReference>
<dbReference type="GO" id="GO:0006508">
    <property type="term" value="P:proteolysis"/>
    <property type="evidence" value="ECO:0007669"/>
    <property type="project" value="UniProtKB-KW"/>
</dbReference>
<dbReference type="CDD" id="cd09597">
    <property type="entry name" value="M4_TLP"/>
    <property type="match status" value="1"/>
</dbReference>
<dbReference type="Gene3D" id="3.10.170.10">
    <property type="match status" value="1"/>
</dbReference>
<dbReference type="Gene3D" id="1.10.390.10">
    <property type="entry name" value="Neutral Protease Domain 2"/>
    <property type="match status" value="1"/>
</dbReference>
<dbReference type="InterPro" id="IPR052759">
    <property type="entry name" value="Metalloprotease_M4"/>
</dbReference>
<dbReference type="InterPro" id="IPR023612">
    <property type="entry name" value="Peptidase_M4"/>
</dbReference>
<dbReference type="InterPro" id="IPR027268">
    <property type="entry name" value="Peptidase_M4/M1_CTD_sf"/>
</dbReference>
<dbReference type="InterPro" id="IPR001570">
    <property type="entry name" value="Peptidase_M4_C_domain"/>
</dbReference>
<dbReference type="InterPro" id="IPR032475">
    <property type="entry name" value="Protealysin_N_PP"/>
</dbReference>
<dbReference type="PANTHER" id="PTHR43579">
    <property type="match status" value="1"/>
</dbReference>
<dbReference type="PANTHER" id="PTHR43579:SF1">
    <property type="entry name" value="NEUTRAL METALLOPROTEINASE"/>
    <property type="match status" value="1"/>
</dbReference>
<dbReference type="Pfam" id="PF02868">
    <property type="entry name" value="Peptidase_M4_C"/>
    <property type="match status" value="1"/>
</dbReference>
<dbReference type="Pfam" id="PF16485">
    <property type="entry name" value="PLN_propep"/>
    <property type="match status" value="1"/>
</dbReference>
<dbReference type="PRINTS" id="PR00730">
    <property type="entry name" value="THERMOLYSIN"/>
</dbReference>
<dbReference type="SUPFAM" id="SSF55486">
    <property type="entry name" value="Metalloproteases ('zincins'), catalytic domain"/>
    <property type="match status" value="1"/>
</dbReference>
<dbReference type="PROSITE" id="PS00142">
    <property type="entry name" value="ZINC_PROTEASE"/>
    <property type="match status" value="1"/>
</dbReference>
<accession>Q06517</accession>
<reference key="1">
    <citation type="journal article" date="1993" name="Gene">
        <title>Cloning, sequencing, and expression of a minor protease-encoding gene from Serratia marcescens ATCC21074.</title>
        <authorList>
            <person name="Kwon Y.T."/>
            <person name="Lee H.H."/>
            <person name="Rho H.M."/>
        </authorList>
    </citation>
    <scope>NUCLEOTIDE SEQUENCE [GENOMIC DNA]</scope>
    <scope>PROTEIN SEQUENCE OF 53-57</scope>
</reference>
<gene>
    <name type="primary">smp</name>
</gene>
<proteinExistence type="evidence at protein level"/>
<organism>
    <name type="scientific">Serratia marcescens (strain ATCC 21074 / E-15)</name>
    <dbReference type="NCBI Taxonomy" id="617"/>
    <lineage>
        <taxon>Bacteria</taxon>
        <taxon>Pseudomonadati</taxon>
        <taxon>Pseudomonadota</taxon>
        <taxon>Gammaproteobacteria</taxon>
        <taxon>Enterobacterales</taxon>
        <taxon>Yersiniaceae</taxon>
        <taxon>Serratia</taxon>
    </lineage>
</organism>
<evidence type="ECO:0000250" key="1"/>
<evidence type="ECO:0000255" key="2">
    <source>
        <dbReference type="PROSITE-ProRule" id="PRU10095"/>
    </source>
</evidence>
<evidence type="ECO:0000256" key="3">
    <source>
        <dbReference type="SAM" id="MobiDB-lite"/>
    </source>
</evidence>
<evidence type="ECO:0000269" key="4">
    <source>
    </source>
</evidence>
<evidence type="ECO:0000305" key="5"/>
<protein>
    <recommendedName>
        <fullName>Extracellular minor metalloprotease</fullName>
        <ecNumber>3.4.24.-</ecNumber>
    </recommendedName>
</protein>